<comment type="catalytic activity">
    <reaction evidence="1">
        <text>(S)-4-amino-5-oxopentanoate = 5-aminolevulinate</text>
        <dbReference type="Rhea" id="RHEA:14265"/>
        <dbReference type="ChEBI" id="CHEBI:57501"/>
        <dbReference type="ChEBI" id="CHEBI:356416"/>
        <dbReference type="EC" id="5.4.3.8"/>
    </reaction>
</comment>
<comment type="cofactor">
    <cofactor evidence="1">
        <name>pyridoxal 5'-phosphate</name>
        <dbReference type="ChEBI" id="CHEBI:597326"/>
    </cofactor>
</comment>
<comment type="pathway">
    <text evidence="1">Porphyrin-containing compound metabolism; protoporphyrin-IX biosynthesis; 5-aminolevulinate from L-glutamyl-tRNA(Glu): step 2/2.</text>
</comment>
<comment type="subunit">
    <text evidence="1">Homodimer.</text>
</comment>
<comment type="subcellular location">
    <subcellularLocation>
        <location evidence="1">Cytoplasm</location>
    </subcellularLocation>
</comment>
<comment type="similarity">
    <text evidence="1">Belongs to the class-III pyridoxal-phosphate-dependent aminotransferase family. HemL subfamily.</text>
</comment>
<reference key="1">
    <citation type="journal article" date="2005" name="Proc. Natl. Acad. Sci. U.S.A.">
        <title>Whole genome sequence of Staphylococcus saprophyticus reveals the pathogenesis of uncomplicated urinary tract infection.</title>
        <authorList>
            <person name="Kuroda M."/>
            <person name="Yamashita A."/>
            <person name="Hirakawa H."/>
            <person name="Kumano M."/>
            <person name="Morikawa K."/>
            <person name="Higashide M."/>
            <person name="Maruyama A."/>
            <person name="Inose Y."/>
            <person name="Matoba K."/>
            <person name="Toh H."/>
            <person name="Kuhara S."/>
            <person name="Hattori M."/>
            <person name="Ohta T."/>
        </authorList>
    </citation>
    <scope>NUCLEOTIDE SEQUENCE [LARGE SCALE GENOMIC DNA]</scope>
    <source>
        <strain>ATCC 15305 / DSM 20229 / NCIMB 8711 / NCTC 7292 / S-41</strain>
    </source>
</reference>
<gene>
    <name evidence="1" type="primary">hemL1</name>
    <name type="ordered locus">SSP0929</name>
</gene>
<keyword id="KW-0963">Cytoplasm</keyword>
<keyword id="KW-0413">Isomerase</keyword>
<keyword id="KW-0627">Porphyrin biosynthesis</keyword>
<keyword id="KW-0663">Pyridoxal phosphate</keyword>
<keyword id="KW-1185">Reference proteome</keyword>
<organism>
    <name type="scientific">Staphylococcus saprophyticus subsp. saprophyticus (strain ATCC 15305 / DSM 20229 / NCIMB 8711 / NCTC 7292 / S-41)</name>
    <dbReference type="NCBI Taxonomy" id="342451"/>
    <lineage>
        <taxon>Bacteria</taxon>
        <taxon>Bacillati</taxon>
        <taxon>Bacillota</taxon>
        <taxon>Bacilli</taxon>
        <taxon>Bacillales</taxon>
        <taxon>Staphylococcaceae</taxon>
        <taxon>Staphylococcus</taxon>
    </lineage>
</organism>
<feature type="chain" id="PRO_0000243624" description="Glutamate-1-semialdehyde 2,1-aminomutase 1">
    <location>
        <begin position="1"/>
        <end position="429"/>
    </location>
</feature>
<feature type="modified residue" description="N6-(pyridoxal phosphate)lysine" evidence="1">
    <location>
        <position position="268"/>
    </location>
</feature>
<name>GSA1_STAS1</name>
<protein>
    <recommendedName>
        <fullName evidence="1">Glutamate-1-semialdehyde 2,1-aminomutase 1</fullName>
        <shortName evidence="1">GSA 1</shortName>
        <ecNumber evidence="1">5.4.3.8</ecNumber>
    </recommendedName>
    <alternativeName>
        <fullName evidence="1">Glutamate-1-semialdehyde aminotransferase 1</fullName>
        <shortName evidence="1">GSA-AT 1</shortName>
    </alternativeName>
</protein>
<proteinExistence type="inferred from homology"/>
<accession>Q49YQ9</accession>
<dbReference type="EC" id="5.4.3.8" evidence="1"/>
<dbReference type="EMBL" id="AP008934">
    <property type="protein sequence ID" value="BAE18074.1"/>
    <property type="molecule type" value="Genomic_DNA"/>
</dbReference>
<dbReference type="RefSeq" id="WP_002482866.1">
    <property type="nucleotide sequence ID" value="NZ_MTGA01000031.1"/>
</dbReference>
<dbReference type="SMR" id="Q49YQ9"/>
<dbReference type="KEGG" id="ssp:SSP0929"/>
<dbReference type="eggNOG" id="COG0001">
    <property type="taxonomic scope" value="Bacteria"/>
</dbReference>
<dbReference type="HOGENOM" id="CLU_016922_1_5_9"/>
<dbReference type="OrthoDB" id="9807885at2"/>
<dbReference type="UniPathway" id="UPA00251">
    <property type="reaction ID" value="UER00317"/>
</dbReference>
<dbReference type="Proteomes" id="UP000006371">
    <property type="component" value="Chromosome"/>
</dbReference>
<dbReference type="GO" id="GO:0005737">
    <property type="term" value="C:cytoplasm"/>
    <property type="evidence" value="ECO:0007669"/>
    <property type="project" value="UniProtKB-SubCell"/>
</dbReference>
<dbReference type="GO" id="GO:0042286">
    <property type="term" value="F:glutamate-1-semialdehyde 2,1-aminomutase activity"/>
    <property type="evidence" value="ECO:0007669"/>
    <property type="project" value="UniProtKB-UniRule"/>
</dbReference>
<dbReference type="GO" id="GO:0030170">
    <property type="term" value="F:pyridoxal phosphate binding"/>
    <property type="evidence" value="ECO:0007669"/>
    <property type="project" value="InterPro"/>
</dbReference>
<dbReference type="GO" id="GO:0008483">
    <property type="term" value="F:transaminase activity"/>
    <property type="evidence" value="ECO:0007669"/>
    <property type="project" value="InterPro"/>
</dbReference>
<dbReference type="GO" id="GO:0006782">
    <property type="term" value="P:protoporphyrinogen IX biosynthetic process"/>
    <property type="evidence" value="ECO:0007669"/>
    <property type="project" value="UniProtKB-UniRule"/>
</dbReference>
<dbReference type="CDD" id="cd00610">
    <property type="entry name" value="OAT_like"/>
    <property type="match status" value="1"/>
</dbReference>
<dbReference type="FunFam" id="3.40.640.10:FF:000021">
    <property type="entry name" value="Glutamate-1-semialdehyde 2,1-aminomutase"/>
    <property type="match status" value="1"/>
</dbReference>
<dbReference type="Gene3D" id="3.90.1150.10">
    <property type="entry name" value="Aspartate Aminotransferase, domain 1"/>
    <property type="match status" value="1"/>
</dbReference>
<dbReference type="Gene3D" id="3.40.640.10">
    <property type="entry name" value="Type I PLP-dependent aspartate aminotransferase-like (Major domain)"/>
    <property type="match status" value="1"/>
</dbReference>
<dbReference type="HAMAP" id="MF_00375">
    <property type="entry name" value="HemL_aminotrans_3"/>
    <property type="match status" value="1"/>
</dbReference>
<dbReference type="InterPro" id="IPR004639">
    <property type="entry name" value="4pyrrol_synth_GluAld_NH2Trfase"/>
</dbReference>
<dbReference type="InterPro" id="IPR005814">
    <property type="entry name" value="Aminotrans_3"/>
</dbReference>
<dbReference type="InterPro" id="IPR049704">
    <property type="entry name" value="Aminotrans_3_PPA_site"/>
</dbReference>
<dbReference type="InterPro" id="IPR015424">
    <property type="entry name" value="PyrdxlP-dep_Trfase"/>
</dbReference>
<dbReference type="InterPro" id="IPR015421">
    <property type="entry name" value="PyrdxlP-dep_Trfase_major"/>
</dbReference>
<dbReference type="InterPro" id="IPR015422">
    <property type="entry name" value="PyrdxlP-dep_Trfase_small"/>
</dbReference>
<dbReference type="NCBIfam" id="TIGR00713">
    <property type="entry name" value="hemL"/>
    <property type="match status" value="1"/>
</dbReference>
<dbReference type="NCBIfam" id="NF000818">
    <property type="entry name" value="PRK00062.1"/>
    <property type="match status" value="1"/>
</dbReference>
<dbReference type="NCBIfam" id="NF009055">
    <property type="entry name" value="PRK12389.1"/>
    <property type="match status" value="1"/>
</dbReference>
<dbReference type="PANTHER" id="PTHR43713">
    <property type="entry name" value="GLUTAMATE-1-SEMIALDEHYDE 2,1-AMINOMUTASE"/>
    <property type="match status" value="1"/>
</dbReference>
<dbReference type="PANTHER" id="PTHR43713:SF1">
    <property type="entry name" value="GLUTAMATE-1-SEMIALDEHYDE 2,1-AMINOMUTASE 2"/>
    <property type="match status" value="1"/>
</dbReference>
<dbReference type="Pfam" id="PF00202">
    <property type="entry name" value="Aminotran_3"/>
    <property type="match status" value="1"/>
</dbReference>
<dbReference type="SUPFAM" id="SSF53383">
    <property type="entry name" value="PLP-dependent transferases"/>
    <property type="match status" value="1"/>
</dbReference>
<dbReference type="PROSITE" id="PS00600">
    <property type="entry name" value="AA_TRANSFER_CLASS_3"/>
    <property type="match status" value="1"/>
</dbReference>
<sequence>MKFTESEKLQKLSDEYILGGVNSPSRSYKAVGGGAPVMMRSGKGAYLYDVDGNKYIDYLQAYGPIITGHAHPHITEAIQEQAALGILYGTPTELEIEFAKKLRDAIPSLEKIRFVNSGTEAVMTTIRVARAYTKRNKIVKFAGQYHGHSDLVLVAAGSGPSQLGSPDSAGVPLSVAQEVITVPYNDIDAYKEAIDYWGDEIAAVLVEPIVGNFGMVEPKQGFLEQVNEITHNNGSLVIYDEVITAFRFHYGGAQDLYKVYPDLTAFGKIIGGGLPIGGYGGKQEIMEQVAPLGPAYQAGTMAGNPLSMKGGIALLEVLEQDGVYEQLDALGKRLEDGLLSLINKHNITATVNRVYGALTLYFTNETVVHYDQAENSDGEAFAKFFKLMLNQGINLAPSKFEAWFLTTEHTEEDIDSTLKAVDYAFSQMK</sequence>
<evidence type="ECO:0000255" key="1">
    <source>
        <dbReference type="HAMAP-Rule" id="MF_00375"/>
    </source>
</evidence>